<organism>
    <name type="scientific">Branchiostoma floridae</name>
    <name type="common">Florida lancelet</name>
    <name type="synonym">Amphioxus</name>
    <dbReference type="NCBI Taxonomy" id="7739"/>
    <lineage>
        <taxon>Eukaryota</taxon>
        <taxon>Metazoa</taxon>
        <taxon>Chordata</taxon>
        <taxon>Cephalochordata</taxon>
        <taxon>Leptocardii</taxon>
        <taxon>Amphioxiformes</taxon>
        <taxon>Branchiostomatidae</taxon>
        <taxon>Branchiostoma</taxon>
    </lineage>
</organism>
<evidence type="ECO:0000255" key="1"/>
<evidence type="ECO:0000256" key="2">
    <source>
        <dbReference type="SAM" id="MobiDB-lite"/>
    </source>
</evidence>
<evidence type="ECO:0000305" key="3"/>
<sequence>MANVNGYVDLLEGIPDETKEEMVELNNTLDKLDSCLDALEEQNDSLNAKLRDLLQSSQQARQELQAERQSLETEQNTEPSTKSDQEQKKQ</sequence>
<name>U184_BRAFL</name>
<keyword id="KW-0175">Coiled coil</keyword>
<keyword id="KW-1185">Reference proteome</keyword>
<dbReference type="EMBL" id="AF391287">
    <property type="protein sequence ID" value="AAM18860.1"/>
    <property type="molecule type" value="Genomic_DNA"/>
</dbReference>
<dbReference type="SMR" id="Q8T784"/>
<dbReference type="Proteomes" id="UP000001554">
    <property type="component" value="Unplaced"/>
</dbReference>
<dbReference type="InterPro" id="IPR005374">
    <property type="entry name" value="BBLN_eukaryota"/>
</dbReference>
<dbReference type="PANTHER" id="PTHR34344:SF1">
    <property type="entry name" value="BUBLIN COILED-COIL PROTEIN"/>
    <property type="match status" value="1"/>
</dbReference>
<dbReference type="PANTHER" id="PTHR34344">
    <property type="entry name" value="UPF0184 PROTEIN C9ORF16"/>
    <property type="match status" value="1"/>
</dbReference>
<dbReference type="Pfam" id="PF03670">
    <property type="entry name" value="UPF0184"/>
    <property type="match status" value="1"/>
</dbReference>
<protein>
    <recommendedName>
        <fullName>UPF0184 protein</fullName>
    </recommendedName>
</protein>
<feature type="chain" id="PRO_0000365075" description="UPF0184 protein">
    <location>
        <begin position="1"/>
        <end position="90"/>
    </location>
</feature>
<feature type="region of interest" description="Disordered" evidence="2">
    <location>
        <begin position="57"/>
        <end position="90"/>
    </location>
</feature>
<feature type="coiled-coil region" evidence="1">
    <location>
        <begin position="16"/>
        <end position="78"/>
    </location>
</feature>
<feature type="compositionally biased region" description="Basic and acidic residues" evidence="2">
    <location>
        <begin position="81"/>
        <end position="90"/>
    </location>
</feature>
<proteinExistence type="inferred from homology"/>
<reference key="1">
    <citation type="journal article" date="2002" name="Nat. Genet.">
        <title>Evidence of en bloc duplication in vertebrate genomes.</title>
        <authorList>
            <person name="Abi-Rached L."/>
            <person name="Gilles A."/>
            <person name="Shiina T."/>
            <person name="Pontarotti P."/>
            <person name="Inoko H."/>
        </authorList>
    </citation>
    <scope>NUCLEOTIDE SEQUENCE [GENOMIC DNA]</scope>
</reference>
<accession>Q8T784</accession>
<comment type="similarity">
    <text evidence="3">Belongs to the UPF0184 (EST00098) family.</text>
</comment>